<name>METN2_STAA8</name>
<organism>
    <name type="scientific">Staphylococcus aureus (strain NCTC 8325 / PS 47)</name>
    <dbReference type="NCBI Taxonomy" id="93061"/>
    <lineage>
        <taxon>Bacteria</taxon>
        <taxon>Bacillati</taxon>
        <taxon>Bacillota</taxon>
        <taxon>Bacilli</taxon>
        <taxon>Bacillales</taxon>
        <taxon>Staphylococcaceae</taxon>
        <taxon>Staphylococcus</taxon>
    </lineage>
</organism>
<comment type="function">
    <text evidence="1">Part of the ABC transporter complex MetNIQ involved in methionine import. Responsible for energy coupling to the transport system.</text>
</comment>
<comment type="catalytic activity">
    <reaction evidence="1">
        <text>L-methionine(out) + ATP + H2O = L-methionine(in) + ADP + phosphate + H(+)</text>
        <dbReference type="Rhea" id="RHEA:29779"/>
        <dbReference type="ChEBI" id="CHEBI:15377"/>
        <dbReference type="ChEBI" id="CHEBI:15378"/>
        <dbReference type="ChEBI" id="CHEBI:30616"/>
        <dbReference type="ChEBI" id="CHEBI:43474"/>
        <dbReference type="ChEBI" id="CHEBI:57844"/>
        <dbReference type="ChEBI" id="CHEBI:456216"/>
        <dbReference type="EC" id="7.4.2.11"/>
    </reaction>
</comment>
<comment type="catalytic activity">
    <reaction evidence="1">
        <text>D-methionine(out) + ATP + H2O = D-methionine(in) + ADP + phosphate + H(+)</text>
        <dbReference type="Rhea" id="RHEA:29767"/>
        <dbReference type="ChEBI" id="CHEBI:15377"/>
        <dbReference type="ChEBI" id="CHEBI:15378"/>
        <dbReference type="ChEBI" id="CHEBI:30616"/>
        <dbReference type="ChEBI" id="CHEBI:43474"/>
        <dbReference type="ChEBI" id="CHEBI:57932"/>
        <dbReference type="ChEBI" id="CHEBI:456216"/>
        <dbReference type="EC" id="7.4.2.11"/>
    </reaction>
</comment>
<comment type="subunit">
    <text evidence="1">The complex is composed of two ATP-binding proteins (MetN), two transmembrane proteins (MetI) and a solute-binding protein (MetQ).</text>
</comment>
<comment type="subcellular location">
    <subcellularLocation>
        <location evidence="1">Cell membrane</location>
        <topology evidence="1">Peripheral membrane protein</topology>
    </subcellularLocation>
</comment>
<comment type="similarity">
    <text evidence="1">Belongs to the ABC transporter superfamily. Methionine importer (TC 3.A.1.24) family.</text>
</comment>
<reference key="1">
    <citation type="book" date="2006" name="Gram positive pathogens, 2nd edition">
        <title>The Staphylococcus aureus NCTC 8325 genome.</title>
        <editorList>
            <person name="Fischetti V."/>
            <person name="Novick R."/>
            <person name="Ferretti J."/>
            <person name="Portnoy D."/>
            <person name="Rood J."/>
        </editorList>
        <authorList>
            <person name="Gillaspy A.F."/>
            <person name="Worrell V."/>
            <person name="Orvis J."/>
            <person name="Roe B.A."/>
            <person name="Dyer D.W."/>
            <person name="Iandolo J.J."/>
        </authorList>
    </citation>
    <scope>NUCLEOTIDE SEQUENCE [LARGE SCALE GENOMIC DNA]</scope>
    <source>
        <strain>NCTC 8325 / PS 47</strain>
    </source>
</reference>
<dbReference type="EC" id="7.4.2.11" evidence="1"/>
<dbReference type="EMBL" id="CP000253">
    <property type="protein sequence ID" value="ABD29968.1"/>
    <property type="molecule type" value="Genomic_DNA"/>
</dbReference>
<dbReference type="RefSeq" id="WP_000571218.1">
    <property type="nucleotide sequence ID" value="NZ_LS483365.1"/>
</dbReference>
<dbReference type="RefSeq" id="YP_499396.1">
    <property type="nucleotide sequence ID" value="NC_007795.1"/>
</dbReference>
<dbReference type="SMR" id="Q2FZZ2"/>
<dbReference type="STRING" id="93061.SAOUHSC_00842"/>
<dbReference type="PaxDb" id="1280-SAXN108_0881"/>
<dbReference type="GeneID" id="3918954"/>
<dbReference type="KEGG" id="sao:SAOUHSC_00842"/>
<dbReference type="PATRIC" id="fig|93061.5.peg.765"/>
<dbReference type="eggNOG" id="COG1135">
    <property type="taxonomic scope" value="Bacteria"/>
</dbReference>
<dbReference type="HOGENOM" id="CLU_000604_1_3_9"/>
<dbReference type="OrthoDB" id="9802264at2"/>
<dbReference type="PRO" id="PR:Q2FZZ2"/>
<dbReference type="Proteomes" id="UP000008816">
    <property type="component" value="Chromosome"/>
</dbReference>
<dbReference type="GO" id="GO:0005886">
    <property type="term" value="C:plasma membrane"/>
    <property type="evidence" value="ECO:0007669"/>
    <property type="project" value="UniProtKB-SubCell"/>
</dbReference>
<dbReference type="GO" id="GO:0033232">
    <property type="term" value="F:ABC-type D-methionine transporter activity"/>
    <property type="evidence" value="ECO:0007669"/>
    <property type="project" value="UniProtKB-EC"/>
</dbReference>
<dbReference type="GO" id="GO:0005524">
    <property type="term" value="F:ATP binding"/>
    <property type="evidence" value="ECO:0007669"/>
    <property type="project" value="UniProtKB-KW"/>
</dbReference>
<dbReference type="GO" id="GO:0016887">
    <property type="term" value="F:ATP hydrolysis activity"/>
    <property type="evidence" value="ECO:0007669"/>
    <property type="project" value="InterPro"/>
</dbReference>
<dbReference type="CDD" id="cd03258">
    <property type="entry name" value="ABC_MetN_methionine_transporter"/>
    <property type="match status" value="1"/>
</dbReference>
<dbReference type="FunFam" id="3.40.50.300:FF:000056">
    <property type="entry name" value="Cell division ATP-binding protein FtsE"/>
    <property type="match status" value="1"/>
</dbReference>
<dbReference type="Gene3D" id="3.30.70.260">
    <property type="match status" value="1"/>
</dbReference>
<dbReference type="Gene3D" id="3.40.50.300">
    <property type="entry name" value="P-loop containing nucleotide triphosphate hydrolases"/>
    <property type="match status" value="1"/>
</dbReference>
<dbReference type="InterPro" id="IPR003593">
    <property type="entry name" value="AAA+_ATPase"/>
</dbReference>
<dbReference type="InterPro" id="IPR003439">
    <property type="entry name" value="ABC_transporter-like_ATP-bd"/>
</dbReference>
<dbReference type="InterPro" id="IPR017871">
    <property type="entry name" value="ABC_transporter-like_CS"/>
</dbReference>
<dbReference type="InterPro" id="IPR045865">
    <property type="entry name" value="ACT-like_dom_sf"/>
</dbReference>
<dbReference type="InterPro" id="IPR041701">
    <property type="entry name" value="MetN_ABC"/>
</dbReference>
<dbReference type="InterPro" id="IPR050086">
    <property type="entry name" value="MetN_ABC_transporter-like"/>
</dbReference>
<dbReference type="InterPro" id="IPR018449">
    <property type="entry name" value="NIL_domain"/>
</dbReference>
<dbReference type="InterPro" id="IPR027417">
    <property type="entry name" value="P-loop_NTPase"/>
</dbReference>
<dbReference type="PANTHER" id="PTHR43166">
    <property type="entry name" value="AMINO ACID IMPORT ATP-BINDING PROTEIN"/>
    <property type="match status" value="1"/>
</dbReference>
<dbReference type="PANTHER" id="PTHR43166:SF36">
    <property type="entry name" value="METHIONINE IMPORT ATP-BINDING PROTEIN METN 2"/>
    <property type="match status" value="1"/>
</dbReference>
<dbReference type="Pfam" id="PF00005">
    <property type="entry name" value="ABC_tran"/>
    <property type="match status" value="1"/>
</dbReference>
<dbReference type="Pfam" id="PF09383">
    <property type="entry name" value="NIL"/>
    <property type="match status" value="1"/>
</dbReference>
<dbReference type="SMART" id="SM00382">
    <property type="entry name" value="AAA"/>
    <property type="match status" value="1"/>
</dbReference>
<dbReference type="SMART" id="SM00930">
    <property type="entry name" value="NIL"/>
    <property type="match status" value="1"/>
</dbReference>
<dbReference type="SUPFAM" id="SSF55021">
    <property type="entry name" value="ACT-like"/>
    <property type="match status" value="1"/>
</dbReference>
<dbReference type="SUPFAM" id="SSF52540">
    <property type="entry name" value="P-loop containing nucleoside triphosphate hydrolases"/>
    <property type="match status" value="1"/>
</dbReference>
<dbReference type="PROSITE" id="PS00211">
    <property type="entry name" value="ABC_TRANSPORTER_1"/>
    <property type="match status" value="1"/>
</dbReference>
<dbReference type="PROSITE" id="PS50893">
    <property type="entry name" value="ABC_TRANSPORTER_2"/>
    <property type="match status" value="1"/>
</dbReference>
<dbReference type="PROSITE" id="PS51264">
    <property type="entry name" value="METN"/>
    <property type="match status" value="1"/>
</dbReference>
<proteinExistence type="inferred from homology"/>
<evidence type="ECO:0000255" key="1">
    <source>
        <dbReference type="HAMAP-Rule" id="MF_01719"/>
    </source>
</evidence>
<feature type="chain" id="PRO_0000270402" description="Methionine import ATP-binding protein MetN 2">
    <location>
        <begin position="1"/>
        <end position="341"/>
    </location>
</feature>
<feature type="domain" description="ABC transporter" evidence="1">
    <location>
        <begin position="2"/>
        <end position="241"/>
    </location>
</feature>
<feature type="binding site" evidence="1">
    <location>
        <begin position="38"/>
        <end position="45"/>
    </location>
    <ligand>
        <name>ATP</name>
        <dbReference type="ChEBI" id="CHEBI:30616"/>
    </ligand>
</feature>
<gene>
    <name evidence="1" type="primary">metN2</name>
    <name type="ordered locus">SAOUHSC_00842</name>
</gene>
<protein>
    <recommendedName>
        <fullName evidence="1">Methionine import ATP-binding protein MetN 2</fullName>
        <ecNumber evidence="1">7.4.2.11</ecNumber>
    </recommendedName>
</protein>
<sequence>MIELKEVVKEYRTKNKEVLAVDHVNLSIRAGSIYGVIGFSGAGKSTLIRMFNHLEAPTSGEVIIDGDHIGQLSKNGLRAKRQKVSMIFQHFNLLWSRTVLKNIMFPLEIAGVPRRRAKQKALELVELVGLKGREKAYPSELSGGQKQRVGIARALANDPTVLLCDEATSALDPQTTDEILDLLLKIREQQNLTIVLITHEMHVIRRICDEVAVMESGKVIEQGPVTQVFENPQHTVTKRFVKDDLNDDFETSLTELEPLEKDAYIVRLVFAGSTTTEPIVSSLSTAYDIKINILEANIKNTKNGTVGFLVLHIPYISSVDFGKFEKELIERQVKMEVLRHG</sequence>
<accession>Q2FZZ2</accession>
<keyword id="KW-0029">Amino-acid transport</keyword>
<keyword id="KW-0067">ATP-binding</keyword>
<keyword id="KW-1003">Cell membrane</keyword>
<keyword id="KW-0472">Membrane</keyword>
<keyword id="KW-0547">Nucleotide-binding</keyword>
<keyword id="KW-1185">Reference proteome</keyword>
<keyword id="KW-1278">Translocase</keyword>
<keyword id="KW-0813">Transport</keyword>